<name>COW2_CONFG</name>
<organism>
    <name type="scientific">Conus frigidus</name>
    <name type="common">Frigid cone</name>
    <dbReference type="NCBI Taxonomy" id="101755"/>
    <lineage>
        <taxon>Eukaryota</taxon>
        <taxon>Metazoa</taxon>
        <taxon>Spiralia</taxon>
        <taxon>Lophotrochozoa</taxon>
        <taxon>Mollusca</taxon>
        <taxon>Gastropoda</taxon>
        <taxon>Caenogastropoda</taxon>
        <taxon>Neogastropoda</taxon>
        <taxon>Conoidea</taxon>
        <taxon>Conidae</taxon>
        <taxon>Conus</taxon>
        <taxon>Virgiconus</taxon>
    </lineage>
</organism>
<proteinExistence type="evidence at protein level"/>
<sequence length="8" mass="953">GCPWDSWC</sequence>
<feature type="peptide" id="PRO_0000445269" description="Contryphan-Fr2" evidence="6">
    <location>
        <begin position="1"/>
        <end position="8"/>
    </location>
</feature>
<feature type="modified residue" description="4-hydroxyproline" evidence="6">
    <location>
        <position position="3"/>
    </location>
</feature>
<feature type="modified residue" description="D-tryptophan" evidence="9">
    <location>
        <position position="4"/>
    </location>
</feature>
<feature type="modified residue" description="Cysteine amide" evidence="6">
    <location>
        <position position="8"/>
    </location>
</feature>
<feature type="disulfide bond" evidence="6">
    <location>
        <begin position="2"/>
        <end position="8"/>
    </location>
</feature>
<accession>P0DPQ2</accession>
<keyword id="KW-0027">Amidation</keyword>
<keyword id="KW-0208">D-amino acid</keyword>
<keyword id="KW-0903">Direct protein sequencing</keyword>
<keyword id="KW-1015">Disulfide bond</keyword>
<keyword id="KW-0379">Hydroxylation</keyword>
<keyword id="KW-0872">Ion channel impairing toxin</keyword>
<keyword id="KW-0528">Neurotoxin</keyword>
<keyword id="KW-0964">Secreted</keyword>
<keyword id="KW-0800">Toxin</keyword>
<evidence type="ECO:0000250" key="1">
    <source>
        <dbReference type="UniProtKB" id="P0C248"/>
    </source>
</evidence>
<evidence type="ECO:0000250" key="2">
    <source>
        <dbReference type="UniProtKB" id="P0C250"/>
    </source>
</evidence>
<evidence type="ECO:0000250" key="3">
    <source>
        <dbReference type="UniProtKB" id="P58787"/>
    </source>
</evidence>
<evidence type="ECO:0000250" key="4">
    <source>
        <dbReference type="UniProtKB" id="P62903"/>
    </source>
</evidence>
<evidence type="ECO:0000250" key="5">
    <source>
        <dbReference type="UniProtKB" id="P83047"/>
    </source>
</evidence>
<evidence type="ECO:0000269" key="6">
    <source>
    </source>
</evidence>
<evidence type="ECO:0000303" key="7">
    <source>
    </source>
</evidence>
<evidence type="ECO:0000305" key="8"/>
<evidence type="ECO:0000305" key="9">
    <source>
    </source>
</evidence>
<comment type="function">
    <text evidence="1 2 4 5">Its target is unknown, but this toxin may modulate voltage-activated calcium channels (Cav) or calcium-dependent potassium channels (KCa).</text>
</comment>
<comment type="subcellular location">
    <subcellularLocation>
        <location evidence="6">Secreted</location>
    </subcellularLocation>
</comment>
<comment type="tissue specificity">
    <text evidence="9">Expressed by the venom duct.</text>
</comment>
<comment type="domain">
    <text evidence="8">The cysteine framework is C-C.</text>
</comment>
<comment type="mass spectrometry" mass="965.43" method="MALDI" evidence="6">
    <text>Monoisotopic mass.</text>
</comment>
<comment type="miscellaneous">
    <text evidence="3">Exists in two forms, due to cis-trans isomerization at 2-Cys-hydroxyPro-3. The cis conformation is the major form.</text>
</comment>
<comment type="similarity">
    <text evidence="8">Belongs to the O2 superfamily. Contryphan family.</text>
</comment>
<dbReference type="GO" id="GO:0005576">
    <property type="term" value="C:extracellular region"/>
    <property type="evidence" value="ECO:0007669"/>
    <property type="project" value="UniProtKB-SubCell"/>
</dbReference>
<dbReference type="GO" id="GO:0099106">
    <property type="term" value="F:ion channel regulator activity"/>
    <property type="evidence" value="ECO:0007669"/>
    <property type="project" value="UniProtKB-KW"/>
</dbReference>
<dbReference type="GO" id="GO:0090729">
    <property type="term" value="F:toxin activity"/>
    <property type="evidence" value="ECO:0007669"/>
    <property type="project" value="UniProtKB-KW"/>
</dbReference>
<reference key="1">
    <citation type="journal article" date="2017" name="J. Proteome Res.">
        <title>Contryphan genes and mature peptides in the venom of nine cone snail species by transcriptomic and mass spectrometric analysis.</title>
        <authorList>
            <person name="Vijayasarathy M."/>
            <person name="Basheer S.M."/>
            <person name="Franklin J.B."/>
            <person name="Balaram P."/>
        </authorList>
    </citation>
    <scope>PROTEIN SEQUENCE</scope>
    <scope>IDENTIFICATION BY MASS SPECTROMETRY</scope>
    <scope>MASS SPECTROMETRY</scope>
    <scope>SUBCELLULAR LOCATION</scope>
    <scope>HYDROXYLATION AT PRO-3</scope>
    <scope>D-AMINO ACID AT TRP-4</scope>
    <scope>AMIDATION AT CYS-8</scope>
    <scope>DISULFIDE BOND</scope>
    <source>
        <tissue>Venom</tissue>
    </source>
</reference>
<protein>
    <recommendedName>
        <fullName evidence="8">Contryphan-Fr2</fullName>
    </recommendedName>
    <alternativeName>
        <fullName evidence="7">Fr965</fullName>
    </alternativeName>
</protein>